<organism>
    <name type="scientific">Crassostrea virginica</name>
    <name type="common">Eastern oyster</name>
    <dbReference type="NCBI Taxonomy" id="6565"/>
    <lineage>
        <taxon>Eukaryota</taxon>
        <taxon>Metazoa</taxon>
        <taxon>Spiralia</taxon>
        <taxon>Lophotrochozoa</taxon>
        <taxon>Mollusca</taxon>
        <taxon>Bivalvia</taxon>
        <taxon>Autobranchia</taxon>
        <taxon>Pteriomorphia</taxon>
        <taxon>Ostreida</taxon>
        <taxon>Ostreoidea</taxon>
        <taxon>Ostreidae</taxon>
        <taxon>Crassostrea</taxon>
    </lineage>
</organism>
<evidence type="ECO:0000269" key="1">
    <source>
    </source>
</evidence>
<evidence type="ECO:0000303" key="2">
    <source>
    </source>
</evidence>
<evidence type="ECO:0000305" key="3"/>
<evidence type="ECO:0000312" key="4">
    <source>
        <dbReference type="EMBL" id="BAH20735.1"/>
    </source>
</evidence>
<comment type="function">
    <text evidence="1">Slow-binding inhibitor of serine proteases. The inhibitor rapidly binds to the protease forming a weak enzyme-inhibitor complex, and this is followed by a slow isomerization forming a tight-binding enzyme-inhibitor complex. Active against subtilisin A with a dissociation constant of 0.18 nM. Active against perkinsin. Not active against thermolysin, papain or pepsin.</text>
</comment>
<comment type="subcellular location">
    <subcellularLocation>
        <location evidence="1">Secreted</location>
    </subcellularLocation>
</comment>
<comment type="tissue specificity">
    <text evidence="1">Detected in hemolymph (at protein level). Within the digestive gland expression is limited to the basophil cells of the digestive diverticula.</text>
</comment>
<comment type="PTM">
    <text evidence="3">Contains 6 disulfide bonds.</text>
</comment>
<comment type="mass spectrometry" mass="7208.0" method="MALDI" evidence="1"/>
<sequence length="85" mass="9086">MKVAVVVALLCFVCYTAAETCSADGDCKNTICDASHDLECHRGQCTCVNHATACSSAADCSGSCTIFGRHGRWHCVDAKCRCFFV</sequence>
<reference evidence="3 4" key="1">
    <citation type="journal article" date="2009" name="Fish Shellfish Immunol.">
        <title>Evidence indicating the existence of a novel family of serine protease inhibitors that may be involved in marine invertebrate immunity.</title>
        <authorList>
            <person name="Xue Q."/>
            <person name="Itoh N."/>
            <person name="Schey K.L."/>
            <person name="Cooper R.K."/>
            <person name="La Peyre J.F."/>
        </authorList>
    </citation>
    <scope>NUCLEOTIDE SEQUENCE [MRNA]</scope>
    <scope>PROTEIN SEQUENCE OF 19-79</scope>
    <scope>FUNCTION</scope>
    <scope>SUBCELLULAR LOCATION</scope>
    <scope>TISSUE SPECIFICITY</scope>
    <scope>MASS SPECTROMETRY</scope>
    <scope>DISULFIDE BONDS</scope>
    <source>
        <tissue evidence="1">Digestive gland</tissue>
        <tissue evidence="1">Hemolymph</tissue>
    </source>
</reference>
<protein>
    <recommendedName>
        <fullName evidence="2">Serine protease inhibitor Cvsi-2</fullName>
    </recommendedName>
</protein>
<keyword id="KW-0903">Direct protein sequencing</keyword>
<keyword id="KW-1015">Disulfide bond</keyword>
<keyword id="KW-0646">Protease inhibitor</keyword>
<keyword id="KW-0964">Secreted</keyword>
<keyword id="KW-0722">Serine protease inhibitor</keyword>
<keyword id="KW-0732">Signal</keyword>
<gene>
    <name evidence="4" type="primary">CVSI2</name>
</gene>
<dbReference type="EMBL" id="AB468967">
    <property type="protein sequence ID" value="BAH20735.1"/>
    <property type="molecule type" value="mRNA"/>
</dbReference>
<dbReference type="MEROPS" id="I84.001"/>
<dbReference type="OrthoDB" id="6098460at2759"/>
<dbReference type="GO" id="GO:0005576">
    <property type="term" value="C:extracellular region"/>
    <property type="evidence" value="ECO:0000314"/>
    <property type="project" value="UniProtKB"/>
</dbReference>
<dbReference type="GO" id="GO:0004867">
    <property type="term" value="F:serine-type endopeptidase inhibitor activity"/>
    <property type="evidence" value="ECO:0000314"/>
    <property type="project" value="UniProtKB"/>
</dbReference>
<name>SPI2_CRAVI</name>
<accession>B9A8D7</accession>
<feature type="signal peptide" evidence="1">
    <location>
        <begin position="1"/>
        <end position="18"/>
    </location>
</feature>
<feature type="chain" id="PRO_0000390781" description="Serine protease inhibitor Cvsi-2" evidence="1">
    <location>
        <begin position="19"/>
        <end position="85"/>
    </location>
</feature>
<proteinExistence type="evidence at protein level"/>